<accession>C3LAH8</accession>
<sequence length="503" mass="56435">MKLLEQIEKWAIETPDQTAFVWRDAKITYKQLKEDSDALAHWISSEYPDDRSPIMVYGHMQPEMIINFLGCVKAGHAYIPVDLSIPADRVQRIAENSGAKLLLSAAVTVTDLPVRIVSEDNLKDIFFTHKGNTPNPEHAVKGDENFYIIYTSGSTGNPKGVQITYNCLVSFTQWAVEDFNLQTGQVFLNQAPFSFDLSVMDIYPSLVTGGTLWAIDKDMIARPKDLFASLEQSDIQVWTSTPSFAEMCLMEASFSESMLPNMKTFLFCGEVLPNEVARKLIERFPKATIMNTYGPTEATVAVTGIHVTEEVLDQYKSLPVGYCKSDCRLLIMKEDGTIAPDGEKGEIVIVGPSVSVGYLGSPELTEKAFTMIDGERAYKTGDAGYVENGLLFYNGRLDFQIKLHGYRMELEEIEHHLRACSYVEGAVIVPIKKGEKYDYLLAVVVPGEHSFEKEFKLTSAIKKELNERLPNYMIPRKFMYQSSIPMTPNGKVDRKKLLSEVTA</sequence>
<evidence type="ECO:0000255" key="1">
    <source>
        <dbReference type="HAMAP-Rule" id="MF_00593"/>
    </source>
</evidence>
<name>DLTA_BACAC</name>
<reference key="1">
    <citation type="submission" date="2008-10" db="EMBL/GenBank/DDBJ databases">
        <title>Genome sequence of Bacillus anthracis str. CDC 684.</title>
        <authorList>
            <person name="Dodson R.J."/>
            <person name="Munk A.C."/>
            <person name="Brettin T."/>
            <person name="Bruce D."/>
            <person name="Detter C."/>
            <person name="Tapia R."/>
            <person name="Han C."/>
            <person name="Sutton G."/>
            <person name="Sims D."/>
        </authorList>
    </citation>
    <scope>NUCLEOTIDE SEQUENCE [LARGE SCALE GENOMIC DNA]</scope>
    <source>
        <strain>CDC 684 / NRRL 3495</strain>
    </source>
</reference>
<organism>
    <name type="scientific">Bacillus anthracis (strain CDC 684 / NRRL 3495)</name>
    <dbReference type="NCBI Taxonomy" id="568206"/>
    <lineage>
        <taxon>Bacteria</taxon>
        <taxon>Bacillati</taxon>
        <taxon>Bacillota</taxon>
        <taxon>Bacilli</taxon>
        <taxon>Bacillales</taxon>
        <taxon>Bacillaceae</taxon>
        <taxon>Bacillus</taxon>
        <taxon>Bacillus cereus group</taxon>
    </lineage>
</organism>
<proteinExistence type="inferred from homology"/>
<comment type="function">
    <text evidence="1">Catalyzes the first step in the D-alanylation of lipoteichoic acid (LTA), the activation of D-alanine and its transfer onto the D-alanyl carrier protein (Dcp) DltC. In an ATP-dependent two-step reaction, forms a high energy D-alanyl-AMP intermediate, followed by transfer of the D-alanyl residue as a thiol ester to the phosphopantheinyl prosthetic group of the Dcp. D-alanylation of LTA plays an important role in modulating the properties of the cell wall in Gram-positive bacteria, influencing the net charge of the cell wall.</text>
</comment>
<comment type="catalytic activity">
    <reaction evidence="1">
        <text>holo-[D-alanyl-carrier protein] + D-alanine + ATP = D-alanyl-[D-alanyl-carrier protein] + AMP + diphosphate</text>
        <dbReference type="Rhea" id="RHEA:55132"/>
        <dbReference type="Rhea" id="RHEA-COMP:14102"/>
        <dbReference type="Rhea" id="RHEA-COMP:14103"/>
        <dbReference type="ChEBI" id="CHEBI:30616"/>
        <dbReference type="ChEBI" id="CHEBI:33019"/>
        <dbReference type="ChEBI" id="CHEBI:57416"/>
        <dbReference type="ChEBI" id="CHEBI:64479"/>
        <dbReference type="ChEBI" id="CHEBI:138620"/>
        <dbReference type="ChEBI" id="CHEBI:456215"/>
        <dbReference type="EC" id="6.2.1.54"/>
    </reaction>
</comment>
<comment type="pathway">
    <text evidence="1">Cell wall biogenesis; lipoteichoic acid biosynthesis.</text>
</comment>
<comment type="subcellular location">
    <subcellularLocation>
        <location evidence="1">Cytoplasm</location>
    </subcellularLocation>
</comment>
<comment type="similarity">
    <text evidence="1">Belongs to the ATP-dependent AMP-binding enzyme family. DltA subfamily.</text>
</comment>
<feature type="chain" id="PRO_1000146969" description="D-alanine--D-alanyl carrier protein ligase">
    <location>
        <begin position="1"/>
        <end position="503"/>
    </location>
</feature>
<feature type="binding site" evidence="1">
    <location>
        <begin position="151"/>
        <end position="152"/>
    </location>
    <ligand>
        <name>ATP</name>
        <dbReference type="ChEBI" id="CHEBI:30616"/>
    </ligand>
</feature>
<feature type="binding site" evidence="1">
    <location>
        <position position="196"/>
    </location>
    <ligand>
        <name>D-alanine</name>
        <dbReference type="ChEBI" id="CHEBI:57416"/>
    </ligand>
</feature>
<feature type="binding site" evidence="1">
    <location>
        <begin position="291"/>
        <end position="296"/>
    </location>
    <ligand>
        <name>ATP</name>
        <dbReference type="ChEBI" id="CHEBI:30616"/>
    </ligand>
</feature>
<feature type="binding site" evidence="1">
    <location>
        <position position="300"/>
    </location>
    <ligand>
        <name>D-alanine</name>
        <dbReference type="ChEBI" id="CHEBI:57416"/>
    </ligand>
</feature>
<feature type="binding site" evidence="1">
    <location>
        <position position="382"/>
    </location>
    <ligand>
        <name>ATP</name>
        <dbReference type="ChEBI" id="CHEBI:30616"/>
    </ligand>
</feature>
<feature type="binding site" evidence="1">
    <location>
        <begin position="393"/>
        <end position="396"/>
    </location>
    <ligand>
        <name>ATP</name>
        <dbReference type="ChEBI" id="CHEBI:30616"/>
    </ligand>
</feature>
<feature type="binding site" evidence="1">
    <location>
        <position position="491"/>
    </location>
    <ligand>
        <name>ATP</name>
        <dbReference type="ChEBI" id="CHEBI:30616"/>
    </ligand>
</feature>
<feature type="binding site" evidence="1">
    <location>
        <position position="491"/>
    </location>
    <ligand>
        <name>D-alanine</name>
        <dbReference type="ChEBI" id="CHEBI:57416"/>
    </ligand>
</feature>
<gene>
    <name evidence="1" type="primary">dltA</name>
    <name type="ordered locus">BAMEG_3204</name>
</gene>
<protein>
    <recommendedName>
        <fullName evidence="1">D-alanine--D-alanyl carrier protein ligase</fullName>
        <shortName evidence="1">DCL</shortName>
        <ecNumber evidence="1">6.2.1.54</ecNumber>
    </recommendedName>
    <alternativeName>
        <fullName evidence="1">D-alanine--poly(phosphoribitol) ligase subunit 1</fullName>
    </alternativeName>
    <alternativeName>
        <fullName evidence="1">D-alanine-activating enzyme</fullName>
        <shortName evidence="1">DAE</shortName>
    </alternativeName>
</protein>
<dbReference type="EC" id="6.2.1.54" evidence="1"/>
<dbReference type="EMBL" id="CP001215">
    <property type="protein sequence ID" value="ACP16010.1"/>
    <property type="molecule type" value="Genomic_DNA"/>
</dbReference>
<dbReference type="RefSeq" id="WP_000770521.1">
    <property type="nucleotide sequence ID" value="NC_012581.1"/>
</dbReference>
<dbReference type="SMR" id="C3LAH8"/>
<dbReference type="GeneID" id="45021373"/>
<dbReference type="KEGG" id="bah:BAMEG_3204"/>
<dbReference type="HOGENOM" id="CLU_000022_2_12_9"/>
<dbReference type="UniPathway" id="UPA00556"/>
<dbReference type="GO" id="GO:0005737">
    <property type="term" value="C:cytoplasm"/>
    <property type="evidence" value="ECO:0007669"/>
    <property type="project" value="UniProtKB-SubCell"/>
</dbReference>
<dbReference type="GO" id="GO:0005524">
    <property type="term" value="F:ATP binding"/>
    <property type="evidence" value="ECO:0007669"/>
    <property type="project" value="UniProtKB-KW"/>
</dbReference>
<dbReference type="GO" id="GO:0047473">
    <property type="term" value="F:D-alanine [D-alanyl carrier protein] ligase activity"/>
    <property type="evidence" value="ECO:0007669"/>
    <property type="project" value="UniProtKB-UniRule"/>
</dbReference>
<dbReference type="GO" id="GO:0070395">
    <property type="term" value="P:lipoteichoic acid biosynthetic process"/>
    <property type="evidence" value="ECO:0007669"/>
    <property type="project" value="UniProtKB-UniRule"/>
</dbReference>
<dbReference type="CDD" id="cd05945">
    <property type="entry name" value="DltA"/>
    <property type="match status" value="1"/>
</dbReference>
<dbReference type="FunFam" id="3.30.300.30:FF:000012">
    <property type="entry name" value="D-alanine--D-alanyl carrier protein ligase"/>
    <property type="match status" value="1"/>
</dbReference>
<dbReference type="FunFam" id="3.40.50.12780:FF:000015">
    <property type="entry name" value="D-alanine--D-alanyl carrier protein ligase"/>
    <property type="match status" value="1"/>
</dbReference>
<dbReference type="Gene3D" id="3.30.300.30">
    <property type="match status" value="1"/>
</dbReference>
<dbReference type="Gene3D" id="3.40.50.12780">
    <property type="entry name" value="N-terminal domain of ligase-like"/>
    <property type="match status" value="1"/>
</dbReference>
<dbReference type="HAMAP" id="MF_00593">
    <property type="entry name" value="DltA"/>
    <property type="match status" value="1"/>
</dbReference>
<dbReference type="InterPro" id="IPR010071">
    <property type="entry name" value="AA_adenyl_dom"/>
</dbReference>
<dbReference type="InterPro" id="IPR025110">
    <property type="entry name" value="AMP-bd_C"/>
</dbReference>
<dbReference type="InterPro" id="IPR045851">
    <property type="entry name" value="AMP-bd_C_sf"/>
</dbReference>
<dbReference type="InterPro" id="IPR020845">
    <property type="entry name" value="AMP-binding_CS"/>
</dbReference>
<dbReference type="InterPro" id="IPR000873">
    <property type="entry name" value="AMP-dep_synth/lig_dom"/>
</dbReference>
<dbReference type="InterPro" id="IPR042099">
    <property type="entry name" value="ANL_N_sf"/>
</dbReference>
<dbReference type="InterPro" id="IPR010072">
    <property type="entry name" value="DltA"/>
</dbReference>
<dbReference type="InterPro" id="IPR044507">
    <property type="entry name" value="DltA-like"/>
</dbReference>
<dbReference type="NCBIfam" id="TIGR01733">
    <property type="entry name" value="AA-adenyl-dom"/>
    <property type="match status" value="1"/>
</dbReference>
<dbReference type="NCBIfam" id="TIGR01734">
    <property type="entry name" value="D-ala-DACP-lig"/>
    <property type="match status" value="1"/>
</dbReference>
<dbReference type="NCBIfam" id="NF003417">
    <property type="entry name" value="PRK04813.1"/>
    <property type="match status" value="1"/>
</dbReference>
<dbReference type="PANTHER" id="PTHR45398">
    <property type="match status" value="1"/>
</dbReference>
<dbReference type="PANTHER" id="PTHR45398:SF1">
    <property type="entry name" value="ENZYME, PUTATIVE (JCVI)-RELATED"/>
    <property type="match status" value="1"/>
</dbReference>
<dbReference type="Pfam" id="PF00501">
    <property type="entry name" value="AMP-binding"/>
    <property type="match status" value="1"/>
</dbReference>
<dbReference type="Pfam" id="PF13193">
    <property type="entry name" value="AMP-binding_C"/>
    <property type="match status" value="1"/>
</dbReference>
<dbReference type="SUPFAM" id="SSF56801">
    <property type="entry name" value="Acetyl-CoA synthetase-like"/>
    <property type="match status" value="1"/>
</dbReference>
<dbReference type="PROSITE" id="PS00455">
    <property type="entry name" value="AMP_BINDING"/>
    <property type="match status" value="1"/>
</dbReference>
<keyword id="KW-0067">ATP-binding</keyword>
<keyword id="KW-0963">Cytoplasm</keyword>
<keyword id="KW-0436">Ligase</keyword>
<keyword id="KW-0547">Nucleotide-binding</keyword>